<sequence>MAKYEILYIIRPNIEEEAKNALVARFDSILTDNGATIVESKDWEKRRLAYEINDFREGLYHIVNLEATDAVALNEFDRLSKINGDILRHMIVKLDA</sequence>
<proteinExistence type="inferred from homology"/>
<comment type="function">
    <text evidence="1">Binds together with bS18 to 16S ribosomal RNA.</text>
</comment>
<comment type="similarity">
    <text evidence="1">Belongs to the bacterial ribosomal protein bS6 family.</text>
</comment>
<evidence type="ECO:0000255" key="1">
    <source>
        <dbReference type="HAMAP-Rule" id="MF_00360"/>
    </source>
</evidence>
<evidence type="ECO:0000305" key="2"/>
<gene>
    <name evidence="1" type="primary">rpsF</name>
    <name type="ordered locus">SZO_16320</name>
</gene>
<organism>
    <name type="scientific">Streptococcus equi subsp. zooepidemicus (strain H70)</name>
    <dbReference type="NCBI Taxonomy" id="553483"/>
    <lineage>
        <taxon>Bacteria</taxon>
        <taxon>Bacillati</taxon>
        <taxon>Bacillota</taxon>
        <taxon>Bacilli</taxon>
        <taxon>Lactobacillales</taxon>
        <taxon>Streptococcaceae</taxon>
        <taxon>Streptococcus</taxon>
    </lineage>
</organism>
<reference key="1">
    <citation type="journal article" date="2009" name="PLoS Pathog.">
        <title>Genomic evidence for the evolution of Streptococcus equi: host restriction, increased virulence, and genetic exchange with human pathogens.</title>
        <authorList>
            <person name="Holden M.T.G."/>
            <person name="Heather Z."/>
            <person name="Paillot R."/>
            <person name="Steward K.F."/>
            <person name="Webb K."/>
            <person name="Ainslie F."/>
            <person name="Jourdan T."/>
            <person name="Bason N.C."/>
            <person name="Holroyd N.E."/>
            <person name="Mungall K."/>
            <person name="Quail M.A."/>
            <person name="Sanders M."/>
            <person name="Simmonds M."/>
            <person name="Willey D."/>
            <person name="Brooks K."/>
            <person name="Aanensen D.M."/>
            <person name="Spratt B.G."/>
            <person name="Jolley K.A."/>
            <person name="Maiden M.C.J."/>
            <person name="Kehoe M."/>
            <person name="Chanter N."/>
            <person name="Bentley S.D."/>
            <person name="Robinson C."/>
            <person name="Maskell D.J."/>
            <person name="Parkhill J."/>
            <person name="Waller A.S."/>
        </authorList>
    </citation>
    <scope>NUCLEOTIDE SEQUENCE [LARGE SCALE GENOMIC DNA]</scope>
    <source>
        <strain>H70</strain>
    </source>
</reference>
<feature type="chain" id="PRO_1000205407" description="Small ribosomal subunit protein bS6">
    <location>
        <begin position="1"/>
        <end position="96"/>
    </location>
</feature>
<dbReference type="EMBL" id="FM204884">
    <property type="protein sequence ID" value="CAX00379.1"/>
    <property type="molecule type" value="Genomic_DNA"/>
</dbReference>
<dbReference type="SMR" id="C0MEM1"/>
<dbReference type="KEGG" id="seq:SZO_16320"/>
<dbReference type="eggNOG" id="COG0360">
    <property type="taxonomic scope" value="Bacteria"/>
</dbReference>
<dbReference type="HOGENOM" id="CLU_113441_5_3_9"/>
<dbReference type="Proteomes" id="UP000001368">
    <property type="component" value="Chromosome"/>
</dbReference>
<dbReference type="GO" id="GO:0005737">
    <property type="term" value="C:cytoplasm"/>
    <property type="evidence" value="ECO:0007669"/>
    <property type="project" value="UniProtKB-ARBA"/>
</dbReference>
<dbReference type="GO" id="GO:1990904">
    <property type="term" value="C:ribonucleoprotein complex"/>
    <property type="evidence" value="ECO:0007669"/>
    <property type="project" value="UniProtKB-KW"/>
</dbReference>
<dbReference type="GO" id="GO:0005840">
    <property type="term" value="C:ribosome"/>
    <property type="evidence" value="ECO:0007669"/>
    <property type="project" value="UniProtKB-KW"/>
</dbReference>
<dbReference type="GO" id="GO:0070181">
    <property type="term" value="F:small ribosomal subunit rRNA binding"/>
    <property type="evidence" value="ECO:0007669"/>
    <property type="project" value="TreeGrafter"/>
</dbReference>
<dbReference type="GO" id="GO:0003735">
    <property type="term" value="F:structural constituent of ribosome"/>
    <property type="evidence" value="ECO:0007669"/>
    <property type="project" value="InterPro"/>
</dbReference>
<dbReference type="GO" id="GO:0006412">
    <property type="term" value="P:translation"/>
    <property type="evidence" value="ECO:0007669"/>
    <property type="project" value="UniProtKB-UniRule"/>
</dbReference>
<dbReference type="CDD" id="cd00473">
    <property type="entry name" value="bS6"/>
    <property type="match status" value="1"/>
</dbReference>
<dbReference type="FunFam" id="3.30.70.60:FF:000002">
    <property type="entry name" value="30S ribosomal protein S6"/>
    <property type="match status" value="1"/>
</dbReference>
<dbReference type="Gene3D" id="3.30.70.60">
    <property type="match status" value="1"/>
</dbReference>
<dbReference type="HAMAP" id="MF_00360">
    <property type="entry name" value="Ribosomal_bS6"/>
    <property type="match status" value="1"/>
</dbReference>
<dbReference type="InterPro" id="IPR000529">
    <property type="entry name" value="Ribosomal_bS6"/>
</dbReference>
<dbReference type="InterPro" id="IPR035980">
    <property type="entry name" value="Ribosomal_bS6_sf"/>
</dbReference>
<dbReference type="InterPro" id="IPR020814">
    <property type="entry name" value="Ribosomal_S6_plastid/chlpt"/>
</dbReference>
<dbReference type="InterPro" id="IPR014717">
    <property type="entry name" value="Transl_elong_EF1B/ribsomal_bS6"/>
</dbReference>
<dbReference type="NCBIfam" id="TIGR00166">
    <property type="entry name" value="S6"/>
    <property type="match status" value="1"/>
</dbReference>
<dbReference type="PANTHER" id="PTHR21011">
    <property type="entry name" value="MITOCHONDRIAL 28S RIBOSOMAL PROTEIN S6"/>
    <property type="match status" value="1"/>
</dbReference>
<dbReference type="PANTHER" id="PTHR21011:SF1">
    <property type="entry name" value="SMALL RIBOSOMAL SUBUNIT PROTEIN BS6M"/>
    <property type="match status" value="1"/>
</dbReference>
<dbReference type="Pfam" id="PF01250">
    <property type="entry name" value="Ribosomal_S6"/>
    <property type="match status" value="1"/>
</dbReference>
<dbReference type="SUPFAM" id="SSF54995">
    <property type="entry name" value="Ribosomal protein S6"/>
    <property type="match status" value="1"/>
</dbReference>
<name>RS6_STRS7</name>
<accession>C0MEM1</accession>
<keyword id="KW-0687">Ribonucleoprotein</keyword>
<keyword id="KW-0689">Ribosomal protein</keyword>
<keyword id="KW-0694">RNA-binding</keyword>
<keyword id="KW-0699">rRNA-binding</keyword>
<protein>
    <recommendedName>
        <fullName evidence="1">Small ribosomal subunit protein bS6</fullName>
    </recommendedName>
    <alternativeName>
        <fullName evidence="2">30S ribosomal protein S6</fullName>
    </alternativeName>
</protein>